<feature type="chain" id="PRO_0000442223" description="NDR1/HIN1-like protein 26">
    <location>
        <begin position="1"/>
        <end position="213"/>
    </location>
</feature>
<feature type="topological domain" description="Cytoplasmic" evidence="6">
    <location>
        <begin position="1"/>
        <end position="27"/>
    </location>
</feature>
<feature type="transmembrane region" description="Helical" evidence="1">
    <location>
        <begin position="28"/>
        <end position="48"/>
    </location>
</feature>
<feature type="topological domain" description="Lumenal" evidence="6">
    <location>
        <begin position="49"/>
        <end position="213"/>
    </location>
</feature>
<feature type="glycosylation site" description="N-linked (GlcNAc...) asparagine" evidence="2">
    <location>
        <position position="67"/>
    </location>
</feature>
<feature type="glycosylation site" description="N-linked (GlcNAc...) asparagine" evidence="2">
    <location>
        <position position="77"/>
    </location>
</feature>
<feature type="glycosylation site" description="N-linked (GlcNAc...) asparagine" evidence="2">
    <location>
        <position position="195"/>
    </location>
</feature>
<sequence>MSQISITSPKHCAKKGGININNRHKKLFFTFSTFFSGLLLIIFLVWLILHPERPEFSLTEADIYSLNLTTSSTHLLNSSVQLTLFSKNPNKKVGIYYDKLLVYAAYRGQQITSEASLPPFYQSHEEINLLTAFLQGTELPVAQSFGYQISRERSTGKIIIGMKMDGKLRWKIGTWVSGAYRFNVNCLAIVAFGMNMTTPPLASLQGTRCSTTI</sequence>
<accession>Q9FI03</accession>
<evidence type="ECO:0000255" key="1"/>
<evidence type="ECO:0000255" key="2">
    <source>
        <dbReference type="PROSITE-ProRule" id="PRU00498"/>
    </source>
</evidence>
<evidence type="ECO:0000269" key="3">
    <source>
    </source>
</evidence>
<evidence type="ECO:0000269" key="4">
    <source>
    </source>
</evidence>
<evidence type="ECO:0000303" key="5">
    <source ref="4"/>
</evidence>
<evidence type="ECO:0000305" key="6"/>
<evidence type="ECO:0000312" key="7">
    <source>
        <dbReference type="Araport" id="AT5G53730"/>
    </source>
</evidence>
<evidence type="ECO:0000312" key="8">
    <source>
        <dbReference type="EMBL" id="BAB09545.1"/>
    </source>
</evidence>
<reference key="1">
    <citation type="journal article" date="1999" name="DNA Res.">
        <title>Structural analysis of Arabidopsis thaliana chromosome 5. IX. Sequence features of the regions of 1,011,550 bp covered by seventeen P1 and TAC clones.</title>
        <authorList>
            <person name="Kaneko T."/>
            <person name="Katoh T."/>
            <person name="Sato S."/>
            <person name="Nakamura Y."/>
            <person name="Asamizu E."/>
            <person name="Kotani H."/>
            <person name="Miyajima N."/>
            <person name="Tabata S."/>
        </authorList>
    </citation>
    <scope>NUCLEOTIDE SEQUENCE [LARGE SCALE GENOMIC DNA]</scope>
    <source>
        <strain>cv. Columbia</strain>
    </source>
</reference>
<reference key="2">
    <citation type="journal article" date="2017" name="Plant J.">
        <title>Araport11: a complete reannotation of the Arabidopsis thaliana reference genome.</title>
        <authorList>
            <person name="Cheng C.Y."/>
            <person name="Krishnakumar V."/>
            <person name="Chan A.P."/>
            <person name="Thibaud-Nissen F."/>
            <person name="Schobel S."/>
            <person name="Town C.D."/>
        </authorList>
    </citation>
    <scope>GENOME REANNOTATION</scope>
    <source>
        <strain>cv. Columbia</strain>
    </source>
</reference>
<reference key="3">
    <citation type="submission" date="2004-01" db="EMBL/GenBank/DDBJ databases">
        <title>Arabidopsis ORF clones.</title>
        <authorList>
            <person name="Cheuk R.F."/>
            <person name="Chen H."/>
            <person name="Kim C.J."/>
            <person name="Shinn P."/>
            <person name="Ecker J.R."/>
        </authorList>
    </citation>
    <scope>NUCLEOTIDE SEQUENCE [LARGE SCALE MRNA]</scope>
    <source>
        <strain>cv. Columbia</strain>
    </source>
</reference>
<reference key="4">
    <citation type="journal article" date="2000" name="Plant Physiol. Biochem.">
        <title>A gene family in Arabidopsis thaliana with sequence similarity to NDR1 and HIN1.</title>
        <authorList>
            <person name="Doermann P."/>
            <person name="Gopalan S."/>
            <person name="He S.Y."/>
            <person name="Benning C."/>
        </authorList>
    </citation>
    <scope>GENE FAMILY</scope>
    <scope>NOMENCLATURE</scope>
</reference>
<reference key="5">
    <citation type="journal article" date="2003" name="Plant J.">
        <title>Large-scale identification of leaf senescence-associated genes.</title>
        <authorList>
            <person name="Gepstein S."/>
            <person name="Sabehi G."/>
            <person name="Carp M.-J."/>
            <person name="Hajouj T."/>
            <person name="Nesher M.F.O."/>
            <person name="Yariv I."/>
            <person name="Dor C."/>
            <person name="Bassani M."/>
        </authorList>
    </citation>
    <scope>INDUCTION BY SENESCENCE</scope>
</reference>
<reference key="6">
    <citation type="journal article" date="2013" name="Plant Cell">
        <title>Increased expression of a phloem membrane protein encoded by NHL26 alters phloem export and sugar partitioning in Arabidopsis.</title>
        <authorList>
            <person name="Vilaine F."/>
            <person name="Kerchev P."/>
            <person name="Clement G."/>
            <person name="Batailler B."/>
            <person name="Cayla T."/>
            <person name="Bill L."/>
            <person name="Gissot L."/>
            <person name="Dinant S."/>
        </authorList>
    </citation>
    <scope>FUNCTION</scope>
    <scope>SUBCELLULAR LOCATION</scope>
    <scope>TISSUE SPECIFICITY</scope>
    <scope>INDUCTION</scope>
    <scope>DISRUPTION PHENOTYPE</scope>
</reference>
<protein>
    <recommendedName>
        <fullName evidence="5">NDR1/HIN1-like protein 26</fullName>
    </recommendedName>
</protein>
<organism>
    <name type="scientific">Arabidopsis thaliana</name>
    <name type="common">Mouse-ear cress</name>
    <dbReference type="NCBI Taxonomy" id="3702"/>
    <lineage>
        <taxon>Eukaryota</taxon>
        <taxon>Viridiplantae</taxon>
        <taxon>Streptophyta</taxon>
        <taxon>Embryophyta</taxon>
        <taxon>Tracheophyta</taxon>
        <taxon>Spermatophyta</taxon>
        <taxon>Magnoliopsida</taxon>
        <taxon>eudicotyledons</taxon>
        <taxon>Gunneridae</taxon>
        <taxon>Pentapetalae</taxon>
        <taxon>rosids</taxon>
        <taxon>malvids</taxon>
        <taxon>Brassicales</taxon>
        <taxon>Brassicaceae</taxon>
        <taxon>Camelineae</taxon>
        <taxon>Arabidopsis</taxon>
    </lineage>
</organism>
<dbReference type="EMBL" id="AB017066">
    <property type="protein sequence ID" value="BAB09545.1"/>
    <property type="molecule type" value="Genomic_DNA"/>
</dbReference>
<dbReference type="EMBL" id="CP002688">
    <property type="protein sequence ID" value="AED96399.1"/>
    <property type="molecule type" value="Genomic_DNA"/>
</dbReference>
<dbReference type="EMBL" id="BT010854">
    <property type="protein sequence ID" value="AAR24221.1"/>
    <property type="molecule type" value="mRNA"/>
</dbReference>
<dbReference type="EMBL" id="BT011320">
    <property type="protein sequence ID" value="AAR92356.1"/>
    <property type="molecule type" value="mRNA"/>
</dbReference>
<dbReference type="RefSeq" id="NP_200184.1">
    <property type="nucleotide sequence ID" value="NM_124752.4"/>
</dbReference>
<dbReference type="SMR" id="Q9FI03"/>
<dbReference type="FunCoup" id="Q9FI03">
    <property type="interactions" value="33"/>
</dbReference>
<dbReference type="STRING" id="3702.Q9FI03"/>
<dbReference type="GlyCosmos" id="Q9FI03">
    <property type="glycosylation" value="3 sites, No reported glycans"/>
</dbReference>
<dbReference type="GlyGen" id="Q9FI03">
    <property type="glycosylation" value="3 sites"/>
</dbReference>
<dbReference type="iPTMnet" id="Q9FI03"/>
<dbReference type="PaxDb" id="3702-AT5G53730.1"/>
<dbReference type="EnsemblPlants" id="AT5G53730.1">
    <property type="protein sequence ID" value="AT5G53730.1"/>
    <property type="gene ID" value="AT5G53730"/>
</dbReference>
<dbReference type="GeneID" id="835454"/>
<dbReference type="Gramene" id="AT5G53730.1">
    <property type="protein sequence ID" value="AT5G53730.1"/>
    <property type="gene ID" value="AT5G53730"/>
</dbReference>
<dbReference type="KEGG" id="ath:AT5G53730"/>
<dbReference type="Araport" id="AT5G53730"/>
<dbReference type="TAIR" id="AT5G53730">
    <property type="gene designation" value="NHL26"/>
</dbReference>
<dbReference type="eggNOG" id="ENOG502QTGM">
    <property type="taxonomic scope" value="Eukaryota"/>
</dbReference>
<dbReference type="HOGENOM" id="CLU_051752_1_1_1"/>
<dbReference type="InParanoid" id="Q9FI03"/>
<dbReference type="OMA" id="RWKIGTW"/>
<dbReference type="OrthoDB" id="1920039at2759"/>
<dbReference type="PhylomeDB" id="Q9FI03"/>
<dbReference type="PRO" id="PR:Q9FI03"/>
<dbReference type="Proteomes" id="UP000006548">
    <property type="component" value="Chromosome 5"/>
</dbReference>
<dbReference type="ExpressionAtlas" id="Q9FI03">
    <property type="expression patterns" value="baseline and differential"/>
</dbReference>
<dbReference type="GO" id="GO:0005783">
    <property type="term" value="C:endoplasmic reticulum"/>
    <property type="evidence" value="ECO:0000314"/>
    <property type="project" value="TAIR"/>
</dbReference>
<dbReference type="GO" id="GO:0005789">
    <property type="term" value="C:endoplasmic reticulum membrane"/>
    <property type="evidence" value="ECO:0007669"/>
    <property type="project" value="UniProtKB-SubCell"/>
</dbReference>
<dbReference type="GO" id="GO:0009511">
    <property type="term" value="C:plasmodesmatal endoplasmic reticulum"/>
    <property type="evidence" value="ECO:0000314"/>
    <property type="project" value="TAIR"/>
</dbReference>
<dbReference type="GO" id="GO:0098542">
    <property type="term" value="P:defense response to other organism"/>
    <property type="evidence" value="ECO:0007669"/>
    <property type="project" value="InterPro"/>
</dbReference>
<dbReference type="GO" id="GO:0110126">
    <property type="term" value="P:phloem loading"/>
    <property type="evidence" value="ECO:0000315"/>
    <property type="project" value="TAIR"/>
</dbReference>
<dbReference type="InterPro" id="IPR004864">
    <property type="entry name" value="LEA_2"/>
</dbReference>
<dbReference type="InterPro" id="IPR044839">
    <property type="entry name" value="NDR1-like"/>
</dbReference>
<dbReference type="PANTHER" id="PTHR31415:SF20">
    <property type="entry name" value="NDR1_HIN1-LIKE PROTEIN 26"/>
    <property type="match status" value="1"/>
</dbReference>
<dbReference type="PANTHER" id="PTHR31415">
    <property type="entry name" value="OS05G0367900 PROTEIN"/>
    <property type="match status" value="1"/>
</dbReference>
<dbReference type="Pfam" id="PF03168">
    <property type="entry name" value="LEA_2"/>
    <property type="match status" value="1"/>
</dbReference>
<name>NHL26_ARATH</name>
<comment type="function">
    <text evidence="4">Involved in the regulation of sugar, amino acid and some primary metabolite export from companion cells (CCs) to sieve elements (SEs) in phloem. Required for apoplastic phloem sugar loading in source leaves in order to transport it to sink tissues. Required for correct sugar partitioning between source leaves and sink organs.</text>
</comment>
<comment type="subcellular location">
    <subcellularLocation>
        <location evidence="4">Cell junction</location>
        <location evidence="4">Plasmodesma</location>
    </subcellularLocation>
    <subcellularLocation>
        <location evidence="4">Endoplasmic reticulum membrane</location>
        <topology evidence="1">Single-pass membrane protein</topology>
    </subcellularLocation>
</comment>
<comment type="tissue specificity">
    <text evidence="4">Expressed in the vasculature of roots, rosette leaves, stems, cauline leaves and flowers. Specifically expressed in phloem.</text>
</comment>
<comment type="induction">
    <text evidence="3 4">Induced by senescence (PubMed:14617064). Down-regulated by sucrose, glucose and fructose (PubMed:23715470).</text>
</comment>
<comment type="disruption phenotype">
    <text evidence="4">No visible phenotype under normal growth conditions.</text>
</comment>
<comment type="miscellaneous">
    <text evidence="4">Plants over-expressing NHL26 exhibit slow growth, accumulate high levels of carbohydrates in mature leaves, have increased shoot biomass, decreased root biomass and decreased seed yield.</text>
</comment>
<proteinExistence type="evidence at transcript level"/>
<gene>
    <name evidence="5" type="primary">NHL26</name>
    <name evidence="7" type="ordered locus">At5g53730</name>
    <name evidence="8" type="ORF">MGN6.8</name>
</gene>
<keyword id="KW-0965">Cell junction</keyword>
<keyword id="KW-0256">Endoplasmic reticulum</keyword>
<keyword id="KW-0325">Glycoprotein</keyword>
<keyword id="KW-0472">Membrane</keyword>
<keyword id="KW-1185">Reference proteome</keyword>
<keyword id="KW-0812">Transmembrane</keyword>
<keyword id="KW-1133">Transmembrane helix</keyword>